<comment type="function">
    <text evidence="8 9 10">Component of the general transcription and DNA repair factor IIH (TFIIH) core complex, which is involved in general and transcription-coupled nucleotide excision repair (NER) of damaged DNA and, when complexed to TFIIK, in RNA transcription by RNA polymerase II. In NER, TFIIH acts by opening DNA around the lesion to allow the excision of the damaged oligonucleotide and its replacement by a new DNA fragment. In transcription, TFIIH has an essential role in transcription initiation. When the pre-initiation complex (PIC) has been established, TFIIH is required for promoter opening and promoter escape. Phosphorylation of the C-terminal tail (CTD) of the largest subunit of RNA polymerase II by the kinase module TFIIK controls the initiation of transcription.</text>
</comment>
<comment type="subunit">
    <text evidence="3 5 6 7 8 9">Component of the 7-subunit TFIIH core complex composed of XPB/SSL2, XPD/RAD3, SSL1, TFB1, TFB2, TFB4 and TFB5, which is active in NER. The core complex associates with the 3-subunit CTD-kinase module TFIIK composed of CCL1, KIN28 and TFB3 to form the 10-subunit holoenzyme (holo-TFIIH) active in transcription (PubMed:14500720, PubMed:7813015, PubMed:7961739). An additionnal subunit, TFB6, plays a role in the dissociation of the SSL2 helicase from TFIIH after transcription initiation (PubMed:22411836). TFB1 interacts with XPC/RAD4. XPC/RAD4 recruits TFIIH to the NER machinery (PubMed:23295669). Interacts with the NER 3'-endonuclease XPG/RAD2. XPG/RAD2 displaces XPC/RAD4 from the repair complex (PubMed:22373916, PubMed:23295669).</text>
</comment>
<comment type="interaction">
    <interactant intactId="EBI-19146">
        <id>P32776</id>
    </interactant>
    <interactant intactId="EBI-18903">
        <id>P36100</id>
        <label>TFA1</label>
    </interactant>
    <organismsDiffer>false</organismsDiffer>
    <experiments>3</experiments>
</comment>
<comment type="interaction">
    <interactant intactId="EBI-19146">
        <id>P32776</id>
    </interactant>
    <interactant intactId="EBI-8284732">
        <id>Q13351</id>
        <label>KLF1</label>
    </interactant>
    <organismsDiffer>true</organismsDiffer>
    <experiments>3</experiments>
</comment>
<comment type="interaction">
    <interactant intactId="EBI-19146">
        <id>P32776</id>
    </interactant>
    <interactant intactId="EBI-366083">
        <id>P04637</id>
        <label>TP53</label>
    </interactant>
    <organismsDiffer>true</organismsDiffer>
    <experiments>7</experiments>
</comment>
<comment type="subcellular location">
    <subcellularLocation>
        <location>Nucleus</location>
    </subcellularLocation>
</comment>
<comment type="miscellaneous">
    <text evidence="4">Present with 5150 molecules/cell in log phase SD medium.</text>
</comment>
<comment type="similarity">
    <text evidence="11">Belongs to the TFB1 family.</text>
</comment>
<organism>
    <name type="scientific">Saccharomyces cerevisiae (strain ATCC 204508 / S288c)</name>
    <name type="common">Baker's yeast</name>
    <dbReference type="NCBI Taxonomy" id="559292"/>
    <lineage>
        <taxon>Eukaryota</taxon>
        <taxon>Fungi</taxon>
        <taxon>Dikarya</taxon>
        <taxon>Ascomycota</taxon>
        <taxon>Saccharomycotina</taxon>
        <taxon>Saccharomycetes</taxon>
        <taxon>Saccharomycetales</taxon>
        <taxon>Saccharomycetaceae</taxon>
        <taxon>Saccharomyces</taxon>
    </lineage>
</organism>
<protein>
    <recommendedName>
        <fullName>General transcription and DNA repair factor IIH subunit TFB1</fullName>
        <shortName>TFIIH subunit TFB1</shortName>
    </recommendedName>
    <alternativeName>
        <fullName>RNA polymerase II transcription factor B 73 kDa subunit</fullName>
    </alternativeName>
    <alternativeName>
        <fullName>RNA polymerase II transcription factor B p73 subunit</fullName>
    </alternativeName>
    <alternativeName>
        <fullName>RNA polymerase II transcription factor B subunit 1</fullName>
    </alternativeName>
</protein>
<reference key="1">
    <citation type="journal article" date="1992" name="Science">
        <title>Cloning of a subunit of yeast RNA polymerase II transcription factor b and CTD kinase.</title>
        <authorList>
            <person name="Gileadi O."/>
            <person name="Feaver W.J."/>
            <person name="Kornberg R.D."/>
        </authorList>
    </citation>
    <scope>NUCLEOTIDE SEQUENCE [GENOMIC DNA]</scope>
    <scope>PROTEIN SEQUENCE OF 314-322 AND 630-639</scope>
</reference>
<reference key="2">
    <citation type="journal article" date="1997" name="Nature">
        <title>The nucleotide sequence of Saccharomyces cerevisiae chromosome IV.</title>
        <authorList>
            <person name="Jacq C."/>
            <person name="Alt-Moerbe J."/>
            <person name="Andre B."/>
            <person name="Arnold W."/>
            <person name="Bahr A."/>
            <person name="Ballesta J.P.G."/>
            <person name="Bargues M."/>
            <person name="Baron L."/>
            <person name="Becker A."/>
            <person name="Biteau N."/>
            <person name="Bloecker H."/>
            <person name="Blugeon C."/>
            <person name="Boskovic J."/>
            <person name="Brandt P."/>
            <person name="Brueckner M."/>
            <person name="Buitrago M.J."/>
            <person name="Coster F."/>
            <person name="Delaveau T."/>
            <person name="del Rey F."/>
            <person name="Dujon B."/>
            <person name="Eide L.G."/>
            <person name="Garcia-Cantalejo J.M."/>
            <person name="Goffeau A."/>
            <person name="Gomez-Peris A."/>
            <person name="Granotier C."/>
            <person name="Hanemann V."/>
            <person name="Hankeln T."/>
            <person name="Hoheisel J.D."/>
            <person name="Jaeger W."/>
            <person name="Jimenez A."/>
            <person name="Jonniaux J.-L."/>
            <person name="Kraemer C."/>
            <person name="Kuester H."/>
            <person name="Laamanen P."/>
            <person name="Legros Y."/>
            <person name="Louis E.J."/>
            <person name="Moeller-Rieker S."/>
            <person name="Monnet A."/>
            <person name="Moro M."/>
            <person name="Mueller-Auer S."/>
            <person name="Nussbaumer B."/>
            <person name="Paricio N."/>
            <person name="Paulin L."/>
            <person name="Perea J."/>
            <person name="Perez-Alonso M."/>
            <person name="Perez-Ortin J.E."/>
            <person name="Pohl T.M."/>
            <person name="Prydz H."/>
            <person name="Purnelle B."/>
            <person name="Rasmussen S.W."/>
            <person name="Remacha M.A."/>
            <person name="Revuelta J.L."/>
            <person name="Rieger M."/>
            <person name="Salom D."/>
            <person name="Saluz H.P."/>
            <person name="Saiz J.E."/>
            <person name="Saren A.-M."/>
            <person name="Schaefer M."/>
            <person name="Scharfe M."/>
            <person name="Schmidt E.R."/>
            <person name="Schneider C."/>
            <person name="Scholler P."/>
            <person name="Schwarz S."/>
            <person name="Soler-Mira A."/>
            <person name="Urrestarazu L.A."/>
            <person name="Verhasselt P."/>
            <person name="Vissers S."/>
            <person name="Voet M."/>
            <person name="Volckaert G."/>
            <person name="Wagner G."/>
            <person name="Wambutt R."/>
            <person name="Wedler E."/>
            <person name="Wedler H."/>
            <person name="Woelfl S."/>
            <person name="Harris D.E."/>
            <person name="Bowman S."/>
            <person name="Brown D."/>
            <person name="Churcher C.M."/>
            <person name="Connor R."/>
            <person name="Dedman K."/>
            <person name="Gentles S."/>
            <person name="Hamlin N."/>
            <person name="Hunt S."/>
            <person name="Jones L."/>
            <person name="McDonald S."/>
            <person name="Murphy L.D."/>
            <person name="Niblett D."/>
            <person name="Odell C."/>
            <person name="Oliver K."/>
            <person name="Rajandream M.A."/>
            <person name="Richards C."/>
            <person name="Shore L."/>
            <person name="Walsh S.V."/>
            <person name="Barrell B.G."/>
            <person name="Dietrich F.S."/>
            <person name="Mulligan J.T."/>
            <person name="Allen E."/>
            <person name="Araujo R."/>
            <person name="Aviles E."/>
            <person name="Berno A."/>
            <person name="Carpenter J."/>
            <person name="Chen E."/>
            <person name="Cherry J.M."/>
            <person name="Chung E."/>
            <person name="Duncan M."/>
            <person name="Hunicke-Smith S."/>
            <person name="Hyman R.W."/>
            <person name="Komp C."/>
            <person name="Lashkari D."/>
            <person name="Lew H."/>
            <person name="Lin D."/>
            <person name="Mosedale D."/>
            <person name="Nakahara K."/>
            <person name="Namath A."/>
            <person name="Oefner P."/>
            <person name="Oh C."/>
            <person name="Petel F.X."/>
            <person name="Roberts D."/>
            <person name="Schramm S."/>
            <person name="Schroeder M."/>
            <person name="Shogren T."/>
            <person name="Shroff N."/>
            <person name="Winant A."/>
            <person name="Yelton M.A."/>
            <person name="Botstein D."/>
            <person name="Davis R.W."/>
            <person name="Johnston M."/>
            <person name="Andrews S."/>
            <person name="Brinkman R."/>
            <person name="Cooper J."/>
            <person name="Ding H."/>
            <person name="Du Z."/>
            <person name="Favello A."/>
            <person name="Fulton L."/>
            <person name="Gattung S."/>
            <person name="Greco T."/>
            <person name="Hallsworth K."/>
            <person name="Hawkins J."/>
            <person name="Hillier L.W."/>
            <person name="Jier M."/>
            <person name="Johnson D."/>
            <person name="Johnston L."/>
            <person name="Kirsten J."/>
            <person name="Kucaba T."/>
            <person name="Langston Y."/>
            <person name="Latreille P."/>
            <person name="Le T."/>
            <person name="Mardis E."/>
            <person name="Menezes S."/>
            <person name="Miller N."/>
            <person name="Nhan M."/>
            <person name="Pauley A."/>
            <person name="Peluso D."/>
            <person name="Rifkin L."/>
            <person name="Riles L."/>
            <person name="Taich A."/>
            <person name="Trevaskis E."/>
            <person name="Vignati D."/>
            <person name="Wilcox L."/>
            <person name="Wohldman P."/>
            <person name="Vaudin M."/>
            <person name="Wilson R."/>
            <person name="Waterston R."/>
            <person name="Albermann K."/>
            <person name="Hani J."/>
            <person name="Heumann K."/>
            <person name="Kleine K."/>
            <person name="Mewes H.-W."/>
            <person name="Zollner A."/>
            <person name="Zaccaria P."/>
        </authorList>
    </citation>
    <scope>NUCLEOTIDE SEQUENCE [LARGE SCALE GENOMIC DNA]</scope>
    <source>
        <strain>ATCC 204508 / S288c</strain>
    </source>
</reference>
<reference key="3">
    <citation type="journal article" date="2014" name="G3 (Bethesda)">
        <title>The reference genome sequence of Saccharomyces cerevisiae: Then and now.</title>
        <authorList>
            <person name="Engel S.R."/>
            <person name="Dietrich F.S."/>
            <person name="Fisk D.G."/>
            <person name="Binkley G."/>
            <person name="Balakrishnan R."/>
            <person name="Costanzo M.C."/>
            <person name="Dwight S.S."/>
            <person name="Hitz B.C."/>
            <person name="Karra K."/>
            <person name="Nash R.S."/>
            <person name="Weng S."/>
            <person name="Wong E.D."/>
            <person name="Lloyd P."/>
            <person name="Skrzypek M.S."/>
            <person name="Miyasato S.R."/>
            <person name="Simison M."/>
            <person name="Cherry J.M."/>
        </authorList>
    </citation>
    <scope>GENOME REANNOTATION</scope>
    <source>
        <strain>ATCC 204508 / S288c</strain>
    </source>
</reference>
<reference key="4">
    <citation type="journal article" date="2007" name="Genome Res.">
        <title>Approaching a complete repository of sequence-verified protein-encoding clones for Saccharomyces cerevisiae.</title>
        <authorList>
            <person name="Hu Y."/>
            <person name="Rolfs A."/>
            <person name="Bhullar B."/>
            <person name="Murthy T.V.S."/>
            <person name="Zhu C."/>
            <person name="Berger M.F."/>
            <person name="Camargo A.A."/>
            <person name="Kelley F."/>
            <person name="McCarron S."/>
            <person name="Jepson D."/>
            <person name="Richardson A."/>
            <person name="Raphael J."/>
            <person name="Moreira D."/>
            <person name="Taycher E."/>
            <person name="Zuo D."/>
            <person name="Mohr S."/>
            <person name="Kane M.F."/>
            <person name="Williamson J."/>
            <person name="Simpson A.J.G."/>
            <person name="Bulyk M.L."/>
            <person name="Harlow E."/>
            <person name="Marsischky G."/>
            <person name="Kolodner R.D."/>
            <person name="LaBaer J."/>
        </authorList>
    </citation>
    <scope>NUCLEOTIDE SEQUENCE [GENOMIC DNA]</scope>
    <source>
        <strain>ATCC 204508 / S288c</strain>
    </source>
</reference>
<reference key="5">
    <citation type="journal article" date="1994" name="J. Biol. Chem.">
        <title>RNA polymerase transcription factor IIH holoenzyme from yeast.</title>
        <authorList>
            <person name="Svejstrup J.Q."/>
            <person name="Feaver W.J."/>
            <person name="LaPointe J."/>
            <person name="Kornberg R.D."/>
        </authorList>
    </citation>
    <scope>FUNCTION OF TFIIH IN RNA POLYMERASE II TRANSCRIPTION</scope>
    <scope>IDENTIFICATION IN THE TFIIH COMPLEX</scope>
</reference>
<reference key="6">
    <citation type="journal article" date="1995" name="Cell">
        <title>Different forms of TFIIH for transcription and DNA repair: holo-TFIIH and a nucleotide excision repairosome.</title>
        <authorList>
            <person name="Svejstrup J.Q."/>
            <person name="Wang Z."/>
            <person name="Feaver W.J."/>
            <person name="Wu X."/>
            <person name="Bushnell D.A."/>
            <person name="Donahue T.F."/>
            <person name="Friedberg E.C."/>
            <person name="Kornberg R.D."/>
        </authorList>
    </citation>
    <scope>FUNCTION</scope>
    <scope>SUBUNIT</scope>
</reference>
<reference key="7">
    <citation type="journal article" date="1996" name="J. Biol. Chem.">
        <title>Reconstitution of TFIIH and requirement of its DNA helicase subunits, Rad3 and Rad25, in the incision step of nucleotide excision repair.</title>
        <authorList>
            <person name="Sung P."/>
            <person name="Guzder S.N."/>
            <person name="Prakash L."/>
            <person name="Prakash S."/>
        </authorList>
    </citation>
    <scope>FUNCTION OF THE TFIIH CORE COMPLEX IN DNA REPAIR</scope>
</reference>
<reference key="8">
    <citation type="journal article" date="2003" name="J. Biol. Chem.">
        <title>Revised subunit structure of yeast transcription factor IIH (TFIIH) and reconciliation with human TFIIH.</title>
        <authorList>
            <person name="Takagi Y."/>
            <person name="Komori H."/>
            <person name="Chang W.-H."/>
            <person name="Hudmon A."/>
            <person name="Erdjument-Bromage H."/>
            <person name="Tempst P."/>
            <person name="Kornberg R.D."/>
        </authorList>
    </citation>
    <scope>IDENTIFICATION IN THE TFIIH CORE COMPLEX</scope>
</reference>
<reference key="9">
    <citation type="journal article" date="2003" name="Nature">
        <title>Global analysis of protein expression in yeast.</title>
        <authorList>
            <person name="Ghaemmaghami S."/>
            <person name="Huh W.-K."/>
            <person name="Bower K."/>
            <person name="Howson R.W."/>
            <person name="Belle A."/>
            <person name="Dephoure N."/>
            <person name="O'Shea E.K."/>
            <person name="Weissman J.S."/>
        </authorList>
    </citation>
    <scope>LEVEL OF PROTEIN EXPRESSION [LARGE SCALE ANALYSIS]</scope>
</reference>
<reference key="10">
    <citation type="journal article" date="2008" name="Mol. Cell. Proteomics">
        <title>A multidimensional chromatography technology for in-depth phosphoproteome analysis.</title>
        <authorList>
            <person name="Albuquerque C.P."/>
            <person name="Smolka M.B."/>
            <person name="Payne S.H."/>
            <person name="Bafna V."/>
            <person name="Eng J."/>
            <person name="Zhou H."/>
        </authorList>
    </citation>
    <scope>PHOSPHORYLATION [LARGE SCALE ANALYSIS] AT THR-150</scope>
    <scope>IDENTIFICATION BY MASS SPECTROMETRY [LARGE SCALE ANALYSIS]</scope>
</reference>
<reference key="11">
    <citation type="journal article" date="2012" name="Proc. Natl. Acad. Sci. U.S.A.">
        <title>Tfb6, a previously unidentified subunit of the general transcription factor TFIIH, facilitates dissociation of Ssl2 helicase after transcription initiation.</title>
        <authorList>
            <person name="Murakami K."/>
            <person name="Gibbons B.J."/>
            <person name="Davis R.E."/>
            <person name="Nagai S."/>
            <person name="Liu X."/>
            <person name="Robinson P.J."/>
            <person name="Wu T."/>
            <person name="Kaplan C.D."/>
            <person name="Kornberg R.D."/>
        </authorList>
    </citation>
    <scope>IDENTIFICATION BY MASS SPECTROMETRY</scope>
    <scope>SUBUNIT</scope>
</reference>
<reference key="12">
    <citation type="journal article" date="2012" name="Nucleic Acids Res.">
        <title>Structural and functional characterization of interactions involving the Tfb1 subunit of TFIIH and the NER factor Rad2.</title>
        <authorList>
            <person name="Lafrance-Vanasse J."/>
            <person name="Arseneault G."/>
            <person name="Cappadocia L."/>
            <person name="Chen H.T."/>
            <person name="Legault P."/>
            <person name="Omichinski J.G."/>
        </authorList>
    </citation>
    <scope>STRUCTURE BY NMR OF 2-115</scope>
    <scope>INTERACTION WITH RAD2</scope>
</reference>
<reference key="13">
    <citation type="journal article" date="2013" name="Nucleic Acids Res.">
        <title>Structural and functional evidence that Rad4 competes with Rad2 for binding to the Tfb1 subunit of TFIIH in NER.</title>
        <authorList>
            <person name="Lafrance-Vanasse J."/>
            <person name="Arseneault G."/>
            <person name="Cappadocia L."/>
            <person name="Legault P."/>
            <person name="Omichinski J.G."/>
        </authorList>
    </citation>
    <scope>STRUCTURE BY NMR OF 2-115</scope>
</reference>
<gene>
    <name type="primary">TFB1</name>
    <name type="ordered locus">YDR311W</name>
    <name type="ORF">D9740.3</name>
</gene>
<feature type="chain" id="PRO_0000119261" description="General transcription and DNA repair factor IIH subunit TFB1">
    <location>
        <begin position="1"/>
        <end position="642"/>
    </location>
</feature>
<feature type="domain" description="BSD 1" evidence="1">
    <location>
        <begin position="165"/>
        <end position="221"/>
    </location>
</feature>
<feature type="domain" description="BSD 2" evidence="1">
    <location>
        <begin position="243"/>
        <end position="295"/>
    </location>
</feature>
<feature type="region of interest" description="Disordered" evidence="2">
    <location>
        <begin position="65"/>
        <end position="85"/>
    </location>
</feature>
<feature type="region of interest" description="Disordered" evidence="2">
    <location>
        <begin position="120"/>
        <end position="154"/>
    </location>
</feature>
<feature type="region of interest" description="Disordered" evidence="2">
    <location>
        <begin position="399"/>
        <end position="418"/>
    </location>
</feature>
<feature type="compositionally biased region" description="Basic and acidic residues" evidence="2">
    <location>
        <begin position="65"/>
        <end position="76"/>
    </location>
</feature>
<feature type="compositionally biased region" description="Polar residues" evidence="2">
    <location>
        <begin position="129"/>
        <end position="143"/>
    </location>
</feature>
<feature type="compositionally biased region" description="Acidic residues" evidence="2">
    <location>
        <begin position="406"/>
        <end position="415"/>
    </location>
</feature>
<feature type="modified residue" description="Phosphothreonine" evidence="12">
    <location>
        <position position="150"/>
    </location>
</feature>
<feature type="sequence conflict" description="In Ref. 4; AAU09707." evidence="11" ref="4">
    <original>F</original>
    <variation>L</variation>
    <location>
        <position position="209"/>
    </location>
</feature>
<feature type="strand" evidence="17">
    <location>
        <begin position="3"/>
        <end position="9"/>
    </location>
</feature>
<feature type="strand" evidence="17">
    <location>
        <begin position="12"/>
        <end position="19"/>
    </location>
</feature>
<feature type="strand" evidence="17">
    <location>
        <begin position="21"/>
        <end position="24"/>
    </location>
</feature>
<feature type="strand" evidence="17">
    <location>
        <begin position="26"/>
        <end position="35"/>
    </location>
</feature>
<feature type="strand" evidence="17">
    <location>
        <begin position="37"/>
        <end position="41"/>
    </location>
</feature>
<feature type="helix" evidence="17">
    <location>
        <begin position="42"/>
        <end position="44"/>
    </location>
</feature>
<feature type="strand" evidence="17">
    <location>
        <begin position="45"/>
        <end position="50"/>
    </location>
</feature>
<feature type="strand" evidence="18">
    <location>
        <begin position="55"/>
        <end position="57"/>
    </location>
</feature>
<feature type="strand" evidence="17">
    <location>
        <begin position="59"/>
        <end position="64"/>
    </location>
</feature>
<feature type="strand" evidence="13">
    <location>
        <begin position="69"/>
        <end position="71"/>
    </location>
</feature>
<feature type="strand" evidence="14">
    <location>
        <begin position="75"/>
        <end position="77"/>
    </location>
</feature>
<feature type="strand" evidence="17">
    <location>
        <begin position="86"/>
        <end position="92"/>
    </location>
</feature>
<feature type="helix" evidence="17">
    <location>
        <begin position="94"/>
        <end position="120"/>
    </location>
</feature>
<feature type="helix" evidence="17">
    <location>
        <begin position="171"/>
        <end position="176"/>
    </location>
</feature>
<feature type="helix" evidence="17">
    <location>
        <begin position="178"/>
        <end position="187"/>
    </location>
</feature>
<feature type="helix" evidence="17">
    <location>
        <begin position="189"/>
        <end position="199"/>
    </location>
</feature>
<feature type="turn" evidence="19">
    <location>
        <begin position="200"/>
        <end position="202"/>
    </location>
</feature>
<feature type="helix" evidence="17">
    <location>
        <begin position="206"/>
        <end position="209"/>
    </location>
</feature>
<feature type="helix" evidence="17">
    <location>
        <begin position="211"/>
        <end position="213"/>
    </location>
</feature>
<feature type="helix" evidence="17">
    <location>
        <begin position="214"/>
        <end position="224"/>
    </location>
</feature>
<feature type="helix" evidence="17">
    <location>
        <begin position="233"/>
        <end position="236"/>
    </location>
</feature>
<feature type="strand" evidence="17">
    <location>
        <begin position="246"/>
        <end position="252"/>
    </location>
</feature>
<feature type="helix" evidence="17">
    <location>
        <begin position="253"/>
        <end position="262"/>
    </location>
</feature>
<feature type="helix" evidence="17">
    <location>
        <begin position="264"/>
        <end position="271"/>
    </location>
</feature>
<feature type="turn" evidence="17">
    <location>
        <begin position="272"/>
        <end position="277"/>
    </location>
</feature>
<feature type="helix" evidence="17">
    <location>
        <begin position="280"/>
        <end position="289"/>
    </location>
</feature>
<feature type="helix" evidence="17">
    <location>
        <begin position="291"/>
        <end position="296"/>
    </location>
</feature>
<feature type="strand" evidence="16">
    <location>
        <begin position="302"/>
        <end position="304"/>
    </location>
</feature>
<feature type="helix" evidence="17">
    <location>
        <begin position="309"/>
        <end position="312"/>
    </location>
</feature>
<feature type="helix" evidence="17">
    <location>
        <begin position="315"/>
        <end position="329"/>
    </location>
</feature>
<feature type="helix" evidence="17">
    <location>
        <begin position="335"/>
        <end position="337"/>
    </location>
</feature>
<feature type="helix" evidence="17">
    <location>
        <begin position="339"/>
        <end position="343"/>
    </location>
</feature>
<feature type="helix" evidence="17">
    <location>
        <begin position="356"/>
        <end position="358"/>
    </location>
</feature>
<feature type="strand" evidence="17">
    <location>
        <begin position="366"/>
        <end position="368"/>
    </location>
</feature>
<feature type="helix" evidence="17">
    <location>
        <begin position="371"/>
        <end position="389"/>
    </location>
</feature>
<feature type="turn" evidence="15">
    <location>
        <begin position="395"/>
        <end position="397"/>
    </location>
</feature>
<feature type="helix" evidence="15">
    <location>
        <begin position="398"/>
        <end position="411"/>
    </location>
</feature>
<feature type="helix" evidence="17">
    <location>
        <begin position="414"/>
        <end position="419"/>
    </location>
</feature>
<feature type="helix" evidence="17">
    <location>
        <begin position="422"/>
        <end position="424"/>
    </location>
</feature>
<feature type="helix" evidence="15">
    <location>
        <begin position="426"/>
        <end position="430"/>
    </location>
</feature>
<feature type="helix" evidence="17">
    <location>
        <begin position="466"/>
        <end position="482"/>
    </location>
</feature>
<feature type="helix" evidence="17">
    <location>
        <begin position="487"/>
        <end position="489"/>
    </location>
</feature>
<feature type="strand" evidence="17">
    <location>
        <begin position="493"/>
        <end position="495"/>
    </location>
</feature>
<feature type="helix" evidence="17">
    <location>
        <begin position="496"/>
        <end position="514"/>
    </location>
</feature>
<feature type="helix" evidence="17">
    <location>
        <begin position="544"/>
        <end position="568"/>
    </location>
</feature>
<feature type="helix" evidence="17">
    <location>
        <begin position="573"/>
        <end position="575"/>
    </location>
</feature>
<feature type="helix" evidence="17">
    <location>
        <begin position="576"/>
        <end position="604"/>
    </location>
</feature>
<feature type="turn" evidence="17">
    <location>
        <begin position="605"/>
        <end position="608"/>
    </location>
</feature>
<feature type="helix" evidence="17">
    <location>
        <begin position="609"/>
        <end position="615"/>
    </location>
</feature>
<feature type="helix" evidence="17">
    <location>
        <begin position="617"/>
        <end position="638"/>
    </location>
</feature>
<name>TFB1_YEAST</name>
<evidence type="ECO:0000255" key="1">
    <source>
        <dbReference type="PROSITE-ProRule" id="PRU00036"/>
    </source>
</evidence>
<evidence type="ECO:0000256" key="2">
    <source>
        <dbReference type="SAM" id="MobiDB-lite"/>
    </source>
</evidence>
<evidence type="ECO:0000269" key="3">
    <source>
    </source>
</evidence>
<evidence type="ECO:0000269" key="4">
    <source>
    </source>
</evidence>
<evidence type="ECO:0000269" key="5">
    <source>
    </source>
</evidence>
<evidence type="ECO:0000269" key="6">
    <source>
    </source>
</evidence>
<evidence type="ECO:0000269" key="7">
    <source>
    </source>
</evidence>
<evidence type="ECO:0000269" key="8">
    <source>
    </source>
</evidence>
<evidence type="ECO:0000269" key="9">
    <source>
    </source>
</evidence>
<evidence type="ECO:0000269" key="10">
    <source>
    </source>
</evidence>
<evidence type="ECO:0000305" key="11"/>
<evidence type="ECO:0007744" key="12">
    <source>
    </source>
</evidence>
<evidence type="ECO:0007829" key="13">
    <source>
        <dbReference type="PDB" id="1Y5O"/>
    </source>
</evidence>
<evidence type="ECO:0007829" key="14">
    <source>
        <dbReference type="PDB" id="2K2U"/>
    </source>
</evidence>
<evidence type="ECO:0007829" key="15">
    <source>
        <dbReference type="PDB" id="7ML0"/>
    </source>
</evidence>
<evidence type="ECO:0007829" key="16">
    <source>
        <dbReference type="PDB" id="7ML4"/>
    </source>
</evidence>
<evidence type="ECO:0007829" key="17">
    <source>
        <dbReference type="PDB" id="7O4J"/>
    </source>
</evidence>
<evidence type="ECO:0007829" key="18">
    <source>
        <dbReference type="PDB" id="7O4L"/>
    </source>
</evidence>
<evidence type="ECO:0007829" key="19">
    <source>
        <dbReference type="PDB" id="7O75"/>
    </source>
</evidence>
<proteinExistence type="evidence at protein level"/>
<sequence length="642" mass="72894">MSHSGAAIFEKVSGIIAINEDVSPAELTWRSTDGDKVHTVVLSTIDKLQATPASSEKMMLRLIGKVDESKKRKDNEGNEVVPKPQRHMFSFNNRTVMDNIKMTLQQIISRYKDADIYEEKRRREESAQHTETPMSSSSVTAGTPTPHLDTPQLNNGAPLINTAKLDDSLSKEKLLTNLKLQQSLLKGNKVLMKVFQETVINAGLPPSEFWSTRIPLLRAFALSTSQKVGPYNVLSTIKPVASSENKVNVNLSREKILNIFENYPIVKKAYTDNVPKNFKEPEFWARFFSSKLFRKLRGEKIMQNDRGDVIIDRYLTLDQEFDRKDDDMLLHPVKKIIDLDGNIQDDPVVRGNRPDFTMQPGVDINGNSDGTVDILKGMNRLSEKMIMALKNEYSRTNLQNKSNITNDEEDEDNDERNELKIDDLNESYKTNYAIIHLKRNAHEKTTDNDAKSSADSIKNADLKVSNQQMLQQLSLVMDNLINKLDLNQVVPNNEVSNKINKRVITAIKINAKQAKHNNVNSALGSFVDNTSQANELEVKSTLPIDLLESCRMLHTTCCEFLKHFYIHFQSGEQKQASTVKKLYNHLKDCIEKLNELFQDVLNGDGESMSNTCTAYLKPVLNSITLATHKYDEYFNEYNNNSN</sequence>
<accession>P32776</accession>
<accession>D6VSU0</accession>
<accession>E9P948</accession>
<keyword id="KW-0002">3D-structure</keyword>
<keyword id="KW-0903">Direct protein sequencing</keyword>
<keyword id="KW-0227">DNA damage</keyword>
<keyword id="KW-0234">DNA repair</keyword>
<keyword id="KW-0539">Nucleus</keyword>
<keyword id="KW-0597">Phosphoprotein</keyword>
<keyword id="KW-1185">Reference proteome</keyword>
<keyword id="KW-0677">Repeat</keyword>
<keyword id="KW-0804">Transcription</keyword>
<keyword id="KW-0805">Transcription regulation</keyword>
<dbReference type="EMBL" id="M95750">
    <property type="protein sequence ID" value="AAA35143.1"/>
    <property type="molecule type" value="Genomic_DNA"/>
</dbReference>
<dbReference type="EMBL" id="U28374">
    <property type="protein sequence ID" value="AAB64747.1"/>
    <property type="molecule type" value="Genomic_DNA"/>
</dbReference>
<dbReference type="EMBL" id="AY723790">
    <property type="protein sequence ID" value="AAU09707.1"/>
    <property type="molecule type" value="Genomic_DNA"/>
</dbReference>
<dbReference type="EMBL" id="BK006938">
    <property type="protein sequence ID" value="DAA12150.1"/>
    <property type="molecule type" value="Genomic_DNA"/>
</dbReference>
<dbReference type="PIR" id="S31285">
    <property type="entry name" value="S31285"/>
</dbReference>
<dbReference type="RefSeq" id="NP_010597.3">
    <property type="nucleotide sequence ID" value="NM_001180619.3"/>
</dbReference>
<dbReference type="PDB" id="1Y5O">
    <property type="method" value="NMR"/>
    <property type="chains" value="A=1-115"/>
</dbReference>
<dbReference type="PDB" id="2GS0">
    <property type="method" value="NMR"/>
    <property type="chains" value="A=1-115"/>
</dbReference>
<dbReference type="PDB" id="2K2U">
    <property type="method" value="NMR"/>
    <property type="chains" value="A=1-115"/>
</dbReference>
<dbReference type="PDB" id="2L2I">
    <property type="method" value="NMR"/>
    <property type="chains" value="A=2-115"/>
</dbReference>
<dbReference type="PDB" id="2LOX">
    <property type="method" value="NMR"/>
    <property type="chains" value="A=2-115"/>
</dbReference>
<dbReference type="PDB" id="2M14">
    <property type="method" value="NMR"/>
    <property type="chains" value="A=2-115"/>
</dbReference>
<dbReference type="PDB" id="2MKR">
    <property type="method" value="NMR"/>
    <property type="chains" value="A=1-115"/>
</dbReference>
<dbReference type="PDB" id="2N0Y">
    <property type="method" value="NMR"/>
    <property type="chains" value="A=1-115"/>
</dbReference>
<dbReference type="PDB" id="2N23">
    <property type="method" value="NMR"/>
    <property type="chains" value="A=2-115"/>
</dbReference>
<dbReference type="PDB" id="5OQJ">
    <property type="method" value="EM"/>
    <property type="resolution" value="4.70 A"/>
    <property type="chains" value="1=1-642"/>
</dbReference>
<dbReference type="PDB" id="5OQM">
    <property type="method" value="EM"/>
    <property type="resolution" value="5.80 A"/>
    <property type="chains" value="1=1-642"/>
</dbReference>
<dbReference type="PDB" id="5URN">
    <property type="method" value="NMR"/>
    <property type="chains" value="A=2-115"/>
</dbReference>
<dbReference type="PDB" id="6GYM">
    <property type="method" value="EM"/>
    <property type="resolution" value="6.70 A"/>
    <property type="chains" value="1=1-642"/>
</dbReference>
<dbReference type="PDB" id="7K01">
    <property type="method" value="EM"/>
    <property type="resolution" value="3.90 A"/>
    <property type="chains" value="1=1-642"/>
</dbReference>
<dbReference type="PDB" id="7K04">
    <property type="method" value="EM"/>
    <property type="resolution" value="9.25 A"/>
    <property type="chains" value="1=2-642"/>
</dbReference>
<dbReference type="PDB" id="7M2U">
    <property type="method" value="EM"/>
    <property type="resolution" value="8.20 A"/>
    <property type="chains" value="1=1-642"/>
</dbReference>
<dbReference type="PDB" id="7ML0">
    <property type="method" value="EM"/>
    <property type="resolution" value="3.00 A"/>
    <property type="chains" value="1=1-642"/>
</dbReference>
<dbReference type="PDB" id="7ML1">
    <property type="method" value="EM"/>
    <property type="resolution" value="4.00 A"/>
    <property type="chains" value="1=1-642"/>
</dbReference>
<dbReference type="PDB" id="7ML2">
    <property type="method" value="EM"/>
    <property type="resolution" value="3.40 A"/>
    <property type="chains" value="1=1-642"/>
</dbReference>
<dbReference type="PDB" id="7ML3">
    <property type="method" value="EM"/>
    <property type="resolution" value="7.60 A"/>
    <property type="chains" value="1=1-642"/>
</dbReference>
<dbReference type="PDB" id="7ML4">
    <property type="method" value="EM"/>
    <property type="resolution" value="3.10 A"/>
    <property type="chains" value="1=1-642"/>
</dbReference>
<dbReference type="PDB" id="7O4I">
    <property type="method" value="EM"/>
    <property type="resolution" value="3.20 A"/>
    <property type="chains" value="1=1-642"/>
</dbReference>
<dbReference type="PDB" id="7O4J">
    <property type="method" value="EM"/>
    <property type="resolution" value="2.90 A"/>
    <property type="chains" value="1=1-642"/>
</dbReference>
<dbReference type="PDB" id="7O4K">
    <property type="method" value="EM"/>
    <property type="resolution" value="3.60 A"/>
    <property type="chains" value="1=1-642"/>
</dbReference>
<dbReference type="PDB" id="7O4L">
    <property type="method" value="EM"/>
    <property type="resolution" value="3.40 A"/>
    <property type="chains" value="1=1-642"/>
</dbReference>
<dbReference type="PDB" id="7O72">
    <property type="method" value="EM"/>
    <property type="resolution" value="3.40 A"/>
    <property type="chains" value="1=1-642"/>
</dbReference>
<dbReference type="PDB" id="7O73">
    <property type="method" value="EM"/>
    <property type="resolution" value="3.40 A"/>
    <property type="chains" value="1=1-642"/>
</dbReference>
<dbReference type="PDB" id="7O75">
    <property type="method" value="EM"/>
    <property type="resolution" value="3.20 A"/>
    <property type="chains" value="1=1-642"/>
</dbReference>
<dbReference type="PDB" id="7ZS9">
    <property type="method" value="EM"/>
    <property type="resolution" value="3.10 A"/>
    <property type="chains" value="1=1-642"/>
</dbReference>
<dbReference type="PDB" id="7ZSA">
    <property type="method" value="EM"/>
    <property type="resolution" value="4.00 A"/>
    <property type="chains" value="1=1-642"/>
</dbReference>
<dbReference type="PDB" id="7ZSB">
    <property type="method" value="EM"/>
    <property type="resolution" value="6.60 A"/>
    <property type="chains" value="1=1-642"/>
</dbReference>
<dbReference type="PDB" id="8CEN">
    <property type="method" value="EM"/>
    <property type="resolution" value="3.00 A"/>
    <property type="chains" value="1=1-642"/>
</dbReference>
<dbReference type="PDB" id="8CEO">
    <property type="method" value="EM"/>
    <property type="resolution" value="3.60 A"/>
    <property type="chains" value="1=1-642"/>
</dbReference>
<dbReference type="PDB" id="8UMH">
    <property type="method" value="EM"/>
    <property type="resolution" value="4.10 A"/>
    <property type="chains" value="1=1-642"/>
</dbReference>
<dbReference type="PDB" id="8UMI">
    <property type="method" value="EM"/>
    <property type="resolution" value="3.70 A"/>
    <property type="chains" value="1=1-642"/>
</dbReference>
<dbReference type="PDB" id="8UOQ">
    <property type="method" value="EM"/>
    <property type="resolution" value="3.80 A"/>
    <property type="chains" value="1=1-642"/>
</dbReference>
<dbReference type="PDB" id="8UOT">
    <property type="method" value="EM"/>
    <property type="resolution" value="3.70 A"/>
    <property type="chains" value="1=1-642"/>
</dbReference>
<dbReference type="PDBsum" id="1Y5O"/>
<dbReference type="PDBsum" id="2GS0"/>
<dbReference type="PDBsum" id="2K2U"/>
<dbReference type="PDBsum" id="2L2I"/>
<dbReference type="PDBsum" id="2LOX"/>
<dbReference type="PDBsum" id="2M14"/>
<dbReference type="PDBsum" id="2MKR"/>
<dbReference type="PDBsum" id="2N0Y"/>
<dbReference type="PDBsum" id="2N23"/>
<dbReference type="PDBsum" id="5OQJ"/>
<dbReference type="PDBsum" id="5OQM"/>
<dbReference type="PDBsum" id="5URN"/>
<dbReference type="PDBsum" id="6GYM"/>
<dbReference type="PDBsum" id="7K01"/>
<dbReference type="PDBsum" id="7K04"/>
<dbReference type="PDBsum" id="7M2U"/>
<dbReference type="PDBsum" id="7ML0"/>
<dbReference type="PDBsum" id="7ML1"/>
<dbReference type="PDBsum" id="7ML2"/>
<dbReference type="PDBsum" id="7ML3"/>
<dbReference type="PDBsum" id="7ML4"/>
<dbReference type="PDBsum" id="7O4I"/>
<dbReference type="PDBsum" id="7O4J"/>
<dbReference type="PDBsum" id="7O4K"/>
<dbReference type="PDBsum" id="7O4L"/>
<dbReference type="PDBsum" id="7O72"/>
<dbReference type="PDBsum" id="7O73"/>
<dbReference type="PDBsum" id="7O75"/>
<dbReference type="PDBsum" id="7ZS9"/>
<dbReference type="PDBsum" id="7ZSA"/>
<dbReference type="PDBsum" id="7ZSB"/>
<dbReference type="PDBsum" id="8CEN"/>
<dbReference type="PDBsum" id="8CEO"/>
<dbReference type="PDBsum" id="8UMH"/>
<dbReference type="PDBsum" id="8UMI"/>
<dbReference type="PDBsum" id="8UOQ"/>
<dbReference type="PDBsum" id="8UOT"/>
<dbReference type="BMRB" id="P32776"/>
<dbReference type="EMDB" id="EMD-0092"/>
<dbReference type="EMDB" id="EMD-12719"/>
<dbReference type="EMDB" id="EMD-12720"/>
<dbReference type="EMDB" id="EMD-12721"/>
<dbReference type="EMDB" id="EMD-12722"/>
<dbReference type="EMDB" id="EMD-12743"/>
<dbReference type="EMDB" id="EMD-12744"/>
<dbReference type="EMDB" id="EMD-12745"/>
<dbReference type="EMDB" id="EMD-14927"/>
<dbReference type="EMDB" id="EMD-14928"/>
<dbReference type="EMDB" id="EMD-14929"/>
<dbReference type="EMDB" id="EMD-22587"/>
<dbReference type="EMDB" id="EMD-22588"/>
<dbReference type="EMDB" id="EMD-23905"/>
<dbReference type="EMDB" id="EMD-23906"/>
<dbReference type="EMDB" id="EMD-23907"/>
<dbReference type="EMDB" id="EMD-23908"/>
<dbReference type="EMDB" id="EMD-3846"/>
<dbReference type="EMDB" id="EMD-3850"/>
<dbReference type="EMDB" id="EMD-42437"/>
<dbReference type="EMDB" id="EMD-42438"/>
<dbReference type="SMR" id="P32776"/>
<dbReference type="BioGRID" id="32364">
    <property type="interactions" value="719"/>
</dbReference>
<dbReference type="ComplexPortal" id="CPX-1659">
    <property type="entry name" value="General transcription factor TFIIH complex"/>
</dbReference>
<dbReference type="DIP" id="DIP-1702N"/>
<dbReference type="FunCoup" id="P32776">
    <property type="interactions" value="1113"/>
</dbReference>
<dbReference type="IntAct" id="P32776">
    <property type="interactions" value="47"/>
</dbReference>
<dbReference type="MINT" id="P32776"/>
<dbReference type="STRING" id="4932.YDR311W"/>
<dbReference type="iPTMnet" id="P32776"/>
<dbReference type="PaxDb" id="4932-YDR311W"/>
<dbReference type="PeptideAtlas" id="P32776"/>
<dbReference type="EnsemblFungi" id="YDR311W_mRNA">
    <property type="protein sequence ID" value="YDR311W"/>
    <property type="gene ID" value="YDR311W"/>
</dbReference>
<dbReference type="GeneID" id="851906"/>
<dbReference type="KEGG" id="sce:YDR311W"/>
<dbReference type="AGR" id="SGD:S000002719"/>
<dbReference type="SGD" id="S000002719">
    <property type="gene designation" value="TFB1"/>
</dbReference>
<dbReference type="VEuPathDB" id="FungiDB:YDR311W"/>
<dbReference type="eggNOG" id="KOG2074">
    <property type="taxonomic scope" value="Eukaryota"/>
</dbReference>
<dbReference type="GeneTree" id="ENSGT00390000015066"/>
<dbReference type="HOGENOM" id="CLU_019188_0_0_1"/>
<dbReference type="InParanoid" id="P32776"/>
<dbReference type="OMA" id="NRPNFDM"/>
<dbReference type="OrthoDB" id="360521at2759"/>
<dbReference type="BioCyc" id="YEAST:G3O-29870-MONOMER"/>
<dbReference type="Reactome" id="R-SCE-113418">
    <property type="pathway name" value="Formation of the Early Elongation Complex"/>
</dbReference>
<dbReference type="Reactome" id="R-SCE-674695">
    <property type="pathway name" value="RNA Polymerase II Pre-transcription Events"/>
</dbReference>
<dbReference type="Reactome" id="R-SCE-6781823">
    <property type="pathway name" value="Formation of TC-NER Pre-Incision Complex"/>
</dbReference>
<dbReference type="Reactome" id="R-SCE-6782135">
    <property type="pathway name" value="Dual incision in TC-NER"/>
</dbReference>
<dbReference type="Reactome" id="R-SCE-6782210">
    <property type="pathway name" value="Gap-filling DNA repair synthesis and ligation in TC-NER"/>
</dbReference>
<dbReference type="Reactome" id="R-SCE-6796648">
    <property type="pathway name" value="TP53 Regulates Transcription of DNA Repair Genes"/>
</dbReference>
<dbReference type="Reactome" id="R-SCE-72086">
    <property type="pathway name" value="mRNA Capping"/>
</dbReference>
<dbReference type="Reactome" id="R-SCE-73772">
    <property type="pathway name" value="RNA Polymerase I Promoter Escape"/>
</dbReference>
<dbReference type="Reactome" id="R-SCE-73776">
    <property type="pathway name" value="RNA Polymerase II Promoter Escape"/>
</dbReference>
<dbReference type="Reactome" id="R-SCE-73779">
    <property type="pathway name" value="RNA Polymerase II Transcription Pre-Initiation And Promoter Opening"/>
</dbReference>
<dbReference type="Reactome" id="R-SCE-75953">
    <property type="pathway name" value="RNA Polymerase II Transcription Initiation"/>
</dbReference>
<dbReference type="Reactome" id="R-SCE-76042">
    <property type="pathway name" value="RNA Polymerase II Transcription Initiation And Promoter Clearance"/>
</dbReference>
<dbReference type="Reactome" id="R-SCE-77075">
    <property type="pathway name" value="RNA Pol II CTD phosphorylation and interaction with CE"/>
</dbReference>
<dbReference type="BioGRID-ORCS" id="851906">
    <property type="hits" value="0 hits in 10 CRISPR screens"/>
</dbReference>
<dbReference type="EvolutionaryTrace" id="P32776"/>
<dbReference type="PRO" id="PR:P32776"/>
<dbReference type="Proteomes" id="UP000002311">
    <property type="component" value="Chromosome IV"/>
</dbReference>
<dbReference type="RNAct" id="P32776">
    <property type="molecule type" value="protein"/>
</dbReference>
<dbReference type="GO" id="GO:0005829">
    <property type="term" value="C:cytosol"/>
    <property type="evidence" value="ECO:0000314"/>
    <property type="project" value="SGD"/>
</dbReference>
<dbReference type="GO" id="GO:0000112">
    <property type="term" value="C:nucleotide-excision repair factor 3 complex"/>
    <property type="evidence" value="ECO:0000314"/>
    <property type="project" value="SGD"/>
</dbReference>
<dbReference type="GO" id="GO:0005634">
    <property type="term" value="C:nucleus"/>
    <property type="evidence" value="ECO:0000314"/>
    <property type="project" value="SGD"/>
</dbReference>
<dbReference type="GO" id="GO:0000439">
    <property type="term" value="C:transcription factor TFIIH core complex"/>
    <property type="evidence" value="ECO:0000314"/>
    <property type="project" value="SGD"/>
</dbReference>
<dbReference type="GO" id="GO:0005675">
    <property type="term" value="C:transcription factor TFIIH holo complex"/>
    <property type="evidence" value="ECO:0000314"/>
    <property type="project" value="SGD"/>
</dbReference>
<dbReference type="GO" id="GO:0032266">
    <property type="term" value="F:phosphatidylinositol-3-phosphate binding"/>
    <property type="evidence" value="ECO:0000314"/>
    <property type="project" value="SGD"/>
</dbReference>
<dbReference type="GO" id="GO:0010314">
    <property type="term" value="F:phosphatidylinositol-5-phosphate binding"/>
    <property type="evidence" value="ECO:0000314"/>
    <property type="project" value="SGD"/>
</dbReference>
<dbReference type="GO" id="GO:0006281">
    <property type="term" value="P:DNA repair"/>
    <property type="evidence" value="ECO:0000318"/>
    <property type="project" value="GO_Central"/>
</dbReference>
<dbReference type="GO" id="GO:0006289">
    <property type="term" value="P:nucleotide-excision repair"/>
    <property type="evidence" value="ECO:0000314"/>
    <property type="project" value="ComplexPortal"/>
</dbReference>
<dbReference type="GO" id="GO:0006360">
    <property type="term" value="P:transcription by RNA polymerase I"/>
    <property type="evidence" value="ECO:0000315"/>
    <property type="project" value="SGD"/>
</dbReference>
<dbReference type="GO" id="GO:0006366">
    <property type="term" value="P:transcription by RNA polymerase II"/>
    <property type="evidence" value="ECO:0000314"/>
    <property type="project" value="SGD"/>
</dbReference>
<dbReference type="GO" id="GO:0006367">
    <property type="term" value="P:transcription initiation at RNA polymerase II promoter"/>
    <property type="evidence" value="ECO:0000314"/>
    <property type="project" value="ComplexPortal"/>
</dbReference>
<dbReference type="CDD" id="cd13229">
    <property type="entry name" value="PH_TFIIH"/>
    <property type="match status" value="1"/>
</dbReference>
<dbReference type="DisProt" id="DP01638"/>
<dbReference type="FunFam" id="2.30.29.30:FF:000484">
    <property type="entry name" value="Transcription initiation factor TFIIH subunit"/>
    <property type="match status" value="1"/>
</dbReference>
<dbReference type="Gene3D" id="1.10.3970.10">
    <property type="entry name" value="BSD domain"/>
    <property type="match status" value="1"/>
</dbReference>
<dbReference type="Gene3D" id="2.30.29.30">
    <property type="entry name" value="Pleckstrin-homology domain (PH domain)/Phosphotyrosine-binding domain (PTB)"/>
    <property type="match status" value="1"/>
</dbReference>
<dbReference type="IDEAL" id="IID50021"/>
<dbReference type="InterPro" id="IPR005607">
    <property type="entry name" value="BSD_dom"/>
</dbReference>
<dbReference type="InterPro" id="IPR035925">
    <property type="entry name" value="BSD_dom_sf"/>
</dbReference>
<dbReference type="InterPro" id="IPR011993">
    <property type="entry name" value="PH-like_dom_sf"/>
</dbReference>
<dbReference type="InterPro" id="IPR027079">
    <property type="entry name" value="Tfb1/GTF2H1"/>
</dbReference>
<dbReference type="InterPro" id="IPR013876">
    <property type="entry name" value="TFIIH_BTF_p62_N"/>
</dbReference>
<dbReference type="PANTHER" id="PTHR12856">
    <property type="entry name" value="TRANSCRIPTION INITIATION FACTOR IIH-RELATED"/>
    <property type="match status" value="1"/>
</dbReference>
<dbReference type="Pfam" id="PF03909">
    <property type="entry name" value="BSD"/>
    <property type="match status" value="2"/>
</dbReference>
<dbReference type="Pfam" id="PF08567">
    <property type="entry name" value="PH_TFIIH"/>
    <property type="match status" value="1"/>
</dbReference>
<dbReference type="SMART" id="SM00751">
    <property type="entry name" value="BSD"/>
    <property type="match status" value="2"/>
</dbReference>
<dbReference type="SUPFAM" id="SSF140383">
    <property type="entry name" value="BSD domain-like"/>
    <property type="match status" value="2"/>
</dbReference>
<dbReference type="SUPFAM" id="SSF50729">
    <property type="entry name" value="PH domain-like"/>
    <property type="match status" value="1"/>
</dbReference>
<dbReference type="PROSITE" id="PS50858">
    <property type="entry name" value="BSD"/>
    <property type="match status" value="2"/>
</dbReference>